<proteinExistence type="inferred from homology"/>
<gene>
    <name evidence="1" type="primary">dxr</name>
    <name type="ordered locus">swp_3515</name>
</gene>
<sequence>MQSLVILGATGSIGASTLNVVKCNHEQYRVFALVANTNVAKMLEICIEHRPLVAHMVNAQAATELKRLLPSELAIEVTTGEDELLSLVSCAEVDTVMAAIVGAAGLPSTLAAVKAGKRVLLANKESLVMSGQLFIEAMQSSGATVLPVDSEHNAIFQCLSERTQLEIGRCDLAGAGISHILLTGSGGPFLNSELSTLSSMTPAQACKHPNWSMGQKISVDSASMMNKGLEYIEARWLFNASAEQLKVVIHPQSVIHSMVQYRDGSVIAQLGNPDMRTPIAHCMSFPQRISSGVEPLDFFKVGQLSFLEPDFNRFPCLALAIEACKQGQEATTVLNAANEISVQAFLEGQIRFTDIAIINEQSFKHVTAQSLTTIDDIMALDSQARQYALEAVNKLK</sequence>
<reference key="1">
    <citation type="journal article" date="2008" name="PLoS ONE">
        <title>Environmental adaptation: genomic analysis of the piezotolerant and psychrotolerant deep-sea iron reducing bacterium Shewanella piezotolerans WP3.</title>
        <authorList>
            <person name="Wang F."/>
            <person name="Wang J."/>
            <person name="Jian H."/>
            <person name="Zhang B."/>
            <person name="Li S."/>
            <person name="Wang F."/>
            <person name="Zeng X."/>
            <person name="Gao L."/>
            <person name="Bartlett D.H."/>
            <person name="Yu J."/>
            <person name="Hu S."/>
            <person name="Xiao X."/>
        </authorList>
    </citation>
    <scope>NUCLEOTIDE SEQUENCE [LARGE SCALE GENOMIC DNA]</scope>
    <source>
        <strain>WP3 / JCM 13877</strain>
    </source>
</reference>
<dbReference type="EC" id="1.1.1.267" evidence="1"/>
<dbReference type="EMBL" id="CP000472">
    <property type="protein sequence ID" value="ACJ30209.1"/>
    <property type="molecule type" value="Genomic_DNA"/>
</dbReference>
<dbReference type="SMR" id="B8CQ79"/>
<dbReference type="STRING" id="225849.swp_3515"/>
<dbReference type="KEGG" id="swp:swp_3515"/>
<dbReference type="eggNOG" id="COG0743">
    <property type="taxonomic scope" value="Bacteria"/>
</dbReference>
<dbReference type="HOGENOM" id="CLU_035714_4_0_6"/>
<dbReference type="OrthoDB" id="9806546at2"/>
<dbReference type="UniPathway" id="UPA00056">
    <property type="reaction ID" value="UER00092"/>
</dbReference>
<dbReference type="Proteomes" id="UP000000753">
    <property type="component" value="Chromosome"/>
</dbReference>
<dbReference type="GO" id="GO:0030604">
    <property type="term" value="F:1-deoxy-D-xylulose-5-phosphate reductoisomerase activity"/>
    <property type="evidence" value="ECO:0007669"/>
    <property type="project" value="UniProtKB-UniRule"/>
</dbReference>
<dbReference type="GO" id="GO:0030145">
    <property type="term" value="F:manganese ion binding"/>
    <property type="evidence" value="ECO:0007669"/>
    <property type="project" value="TreeGrafter"/>
</dbReference>
<dbReference type="GO" id="GO:0070402">
    <property type="term" value="F:NADPH binding"/>
    <property type="evidence" value="ECO:0007669"/>
    <property type="project" value="InterPro"/>
</dbReference>
<dbReference type="GO" id="GO:0051484">
    <property type="term" value="P:isopentenyl diphosphate biosynthetic process, methylerythritol 4-phosphate pathway involved in terpenoid biosynthetic process"/>
    <property type="evidence" value="ECO:0007669"/>
    <property type="project" value="TreeGrafter"/>
</dbReference>
<dbReference type="FunFam" id="1.10.1740.10:FF:000004">
    <property type="entry name" value="1-deoxy-D-xylulose 5-phosphate reductoisomerase"/>
    <property type="match status" value="1"/>
</dbReference>
<dbReference type="FunFam" id="3.40.50.720:FF:000045">
    <property type="entry name" value="1-deoxy-D-xylulose 5-phosphate reductoisomerase"/>
    <property type="match status" value="1"/>
</dbReference>
<dbReference type="Gene3D" id="1.10.1740.10">
    <property type="match status" value="1"/>
</dbReference>
<dbReference type="Gene3D" id="3.40.50.720">
    <property type="entry name" value="NAD(P)-binding Rossmann-like Domain"/>
    <property type="match status" value="1"/>
</dbReference>
<dbReference type="HAMAP" id="MF_00183">
    <property type="entry name" value="DXP_reductoisom"/>
    <property type="match status" value="1"/>
</dbReference>
<dbReference type="InterPro" id="IPR003821">
    <property type="entry name" value="DXP_reductoisomerase"/>
</dbReference>
<dbReference type="InterPro" id="IPR013644">
    <property type="entry name" value="DXP_reductoisomerase_C"/>
</dbReference>
<dbReference type="InterPro" id="IPR013512">
    <property type="entry name" value="DXP_reductoisomerase_N"/>
</dbReference>
<dbReference type="InterPro" id="IPR026877">
    <property type="entry name" value="DXPR_C"/>
</dbReference>
<dbReference type="InterPro" id="IPR036169">
    <property type="entry name" value="DXPR_C_sf"/>
</dbReference>
<dbReference type="InterPro" id="IPR036291">
    <property type="entry name" value="NAD(P)-bd_dom_sf"/>
</dbReference>
<dbReference type="NCBIfam" id="TIGR00243">
    <property type="entry name" value="Dxr"/>
    <property type="match status" value="1"/>
</dbReference>
<dbReference type="NCBIfam" id="NF003938">
    <property type="entry name" value="PRK05447.1-1"/>
    <property type="match status" value="1"/>
</dbReference>
<dbReference type="NCBIfam" id="NF009114">
    <property type="entry name" value="PRK12464.1"/>
    <property type="match status" value="1"/>
</dbReference>
<dbReference type="PANTHER" id="PTHR30525">
    <property type="entry name" value="1-DEOXY-D-XYLULOSE 5-PHOSPHATE REDUCTOISOMERASE"/>
    <property type="match status" value="1"/>
</dbReference>
<dbReference type="PANTHER" id="PTHR30525:SF0">
    <property type="entry name" value="1-DEOXY-D-XYLULOSE 5-PHOSPHATE REDUCTOISOMERASE, CHLOROPLASTIC"/>
    <property type="match status" value="1"/>
</dbReference>
<dbReference type="Pfam" id="PF08436">
    <property type="entry name" value="DXP_redisom_C"/>
    <property type="match status" value="1"/>
</dbReference>
<dbReference type="Pfam" id="PF02670">
    <property type="entry name" value="DXP_reductoisom"/>
    <property type="match status" value="1"/>
</dbReference>
<dbReference type="Pfam" id="PF13288">
    <property type="entry name" value="DXPR_C"/>
    <property type="match status" value="1"/>
</dbReference>
<dbReference type="PIRSF" id="PIRSF006205">
    <property type="entry name" value="Dxp_reductismrs"/>
    <property type="match status" value="1"/>
</dbReference>
<dbReference type="SUPFAM" id="SSF69055">
    <property type="entry name" value="1-deoxy-D-xylulose-5-phosphate reductoisomerase, C-terminal domain"/>
    <property type="match status" value="1"/>
</dbReference>
<dbReference type="SUPFAM" id="SSF55347">
    <property type="entry name" value="Glyceraldehyde-3-phosphate dehydrogenase-like, C-terminal domain"/>
    <property type="match status" value="1"/>
</dbReference>
<dbReference type="SUPFAM" id="SSF51735">
    <property type="entry name" value="NAD(P)-binding Rossmann-fold domains"/>
    <property type="match status" value="1"/>
</dbReference>
<comment type="function">
    <text evidence="1">Catalyzes the NADPH-dependent rearrangement and reduction of 1-deoxy-D-xylulose-5-phosphate (DXP) to 2-C-methyl-D-erythritol 4-phosphate (MEP).</text>
</comment>
<comment type="catalytic activity">
    <reaction evidence="1">
        <text>2-C-methyl-D-erythritol 4-phosphate + NADP(+) = 1-deoxy-D-xylulose 5-phosphate + NADPH + H(+)</text>
        <dbReference type="Rhea" id="RHEA:13717"/>
        <dbReference type="ChEBI" id="CHEBI:15378"/>
        <dbReference type="ChEBI" id="CHEBI:57783"/>
        <dbReference type="ChEBI" id="CHEBI:57792"/>
        <dbReference type="ChEBI" id="CHEBI:58262"/>
        <dbReference type="ChEBI" id="CHEBI:58349"/>
        <dbReference type="EC" id="1.1.1.267"/>
    </reaction>
    <physiologicalReaction direction="right-to-left" evidence="1">
        <dbReference type="Rhea" id="RHEA:13719"/>
    </physiologicalReaction>
</comment>
<comment type="cofactor">
    <cofactor evidence="1">
        <name>Mg(2+)</name>
        <dbReference type="ChEBI" id="CHEBI:18420"/>
    </cofactor>
    <cofactor evidence="1">
        <name>Mn(2+)</name>
        <dbReference type="ChEBI" id="CHEBI:29035"/>
    </cofactor>
</comment>
<comment type="pathway">
    <text evidence="1">Isoprenoid biosynthesis; isopentenyl diphosphate biosynthesis via DXP pathway; isopentenyl diphosphate from 1-deoxy-D-xylulose 5-phosphate: step 1/6.</text>
</comment>
<comment type="similarity">
    <text evidence="1">Belongs to the DXR family.</text>
</comment>
<protein>
    <recommendedName>
        <fullName evidence="1">1-deoxy-D-xylulose 5-phosphate reductoisomerase</fullName>
        <shortName evidence="1">DXP reductoisomerase</shortName>
        <ecNumber evidence="1">1.1.1.267</ecNumber>
    </recommendedName>
    <alternativeName>
        <fullName evidence="1">1-deoxyxylulose-5-phosphate reductoisomerase</fullName>
    </alternativeName>
    <alternativeName>
        <fullName evidence="1">2-C-methyl-D-erythritol 4-phosphate synthase</fullName>
    </alternativeName>
</protein>
<evidence type="ECO:0000255" key="1">
    <source>
        <dbReference type="HAMAP-Rule" id="MF_00183"/>
    </source>
</evidence>
<feature type="chain" id="PRO_1000118496" description="1-deoxy-D-xylulose 5-phosphate reductoisomerase">
    <location>
        <begin position="1"/>
        <end position="396"/>
    </location>
</feature>
<feature type="binding site" evidence="1">
    <location>
        <position position="10"/>
    </location>
    <ligand>
        <name>NADPH</name>
        <dbReference type="ChEBI" id="CHEBI:57783"/>
    </ligand>
</feature>
<feature type="binding site" evidence="1">
    <location>
        <position position="11"/>
    </location>
    <ligand>
        <name>NADPH</name>
        <dbReference type="ChEBI" id="CHEBI:57783"/>
    </ligand>
</feature>
<feature type="binding site" evidence="1">
    <location>
        <position position="12"/>
    </location>
    <ligand>
        <name>NADPH</name>
        <dbReference type="ChEBI" id="CHEBI:57783"/>
    </ligand>
</feature>
<feature type="binding site" evidence="1">
    <location>
        <position position="13"/>
    </location>
    <ligand>
        <name>NADPH</name>
        <dbReference type="ChEBI" id="CHEBI:57783"/>
    </ligand>
</feature>
<feature type="binding site" evidence="1">
    <location>
        <position position="38"/>
    </location>
    <ligand>
        <name>NADPH</name>
        <dbReference type="ChEBI" id="CHEBI:57783"/>
    </ligand>
</feature>
<feature type="binding site" evidence="1">
    <location>
        <position position="123"/>
    </location>
    <ligand>
        <name>NADPH</name>
        <dbReference type="ChEBI" id="CHEBI:57783"/>
    </ligand>
</feature>
<feature type="binding site" evidence="1">
    <location>
        <position position="124"/>
    </location>
    <ligand>
        <name>1-deoxy-D-xylulose 5-phosphate</name>
        <dbReference type="ChEBI" id="CHEBI:57792"/>
    </ligand>
</feature>
<feature type="binding site" evidence="1">
    <location>
        <position position="125"/>
    </location>
    <ligand>
        <name>NADPH</name>
        <dbReference type="ChEBI" id="CHEBI:57783"/>
    </ligand>
</feature>
<feature type="binding site" evidence="1">
    <location>
        <position position="149"/>
    </location>
    <ligand>
        <name>Mn(2+)</name>
        <dbReference type="ChEBI" id="CHEBI:29035"/>
    </ligand>
</feature>
<feature type="binding site" evidence="1">
    <location>
        <position position="150"/>
    </location>
    <ligand>
        <name>1-deoxy-D-xylulose 5-phosphate</name>
        <dbReference type="ChEBI" id="CHEBI:57792"/>
    </ligand>
</feature>
<feature type="binding site" evidence="1">
    <location>
        <position position="151"/>
    </location>
    <ligand>
        <name>1-deoxy-D-xylulose 5-phosphate</name>
        <dbReference type="ChEBI" id="CHEBI:57792"/>
    </ligand>
</feature>
<feature type="binding site" evidence="1">
    <location>
        <position position="151"/>
    </location>
    <ligand>
        <name>Mn(2+)</name>
        <dbReference type="ChEBI" id="CHEBI:29035"/>
    </ligand>
</feature>
<feature type="binding site" evidence="1">
    <location>
        <position position="185"/>
    </location>
    <ligand>
        <name>1-deoxy-D-xylulose 5-phosphate</name>
        <dbReference type="ChEBI" id="CHEBI:57792"/>
    </ligand>
</feature>
<feature type="binding site" evidence="1">
    <location>
        <position position="208"/>
    </location>
    <ligand>
        <name>1-deoxy-D-xylulose 5-phosphate</name>
        <dbReference type="ChEBI" id="CHEBI:57792"/>
    </ligand>
</feature>
<feature type="binding site" evidence="1">
    <location>
        <position position="214"/>
    </location>
    <ligand>
        <name>NADPH</name>
        <dbReference type="ChEBI" id="CHEBI:57783"/>
    </ligand>
</feature>
<feature type="binding site" evidence="1">
    <location>
        <position position="221"/>
    </location>
    <ligand>
        <name>1-deoxy-D-xylulose 5-phosphate</name>
        <dbReference type="ChEBI" id="CHEBI:57792"/>
    </ligand>
</feature>
<feature type="binding site" evidence="1">
    <location>
        <position position="226"/>
    </location>
    <ligand>
        <name>1-deoxy-D-xylulose 5-phosphate</name>
        <dbReference type="ChEBI" id="CHEBI:57792"/>
    </ligand>
</feature>
<feature type="binding site" evidence="1">
    <location>
        <position position="227"/>
    </location>
    <ligand>
        <name>1-deoxy-D-xylulose 5-phosphate</name>
        <dbReference type="ChEBI" id="CHEBI:57792"/>
    </ligand>
</feature>
<feature type="binding site" evidence="1">
    <location>
        <position position="230"/>
    </location>
    <ligand>
        <name>1-deoxy-D-xylulose 5-phosphate</name>
        <dbReference type="ChEBI" id="CHEBI:57792"/>
    </ligand>
</feature>
<feature type="binding site" evidence="1">
    <location>
        <position position="230"/>
    </location>
    <ligand>
        <name>Mn(2+)</name>
        <dbReference type="ChEBI" id="CHEBI:29035"/>
    </ligand>
</feature>
<keyword id="KW-0414">Isoprene biosynthesis</keyword>
<keyword id="KW-0464">Manganese</keyword>
<keyword id="KW-0479">Metal-binding</keyword>
<keyword id="KW-0521">NADP</keyword>
<keyword id="KW-0560">Oxidoreductase</keyword>
<accession>B8CQ79</accession>
<name>DXR_SHEPW</name>
<organism>
    <name type="scientific">Shewanella piezotolerans (strain WP3 / JCM 13877)</name>
    <dbReference type="NCBI Taxonomy" id="225849"/>
    <lineage>
        <taxon>Bacteria</taxon>
        <taxon>Pseudomonadati</taxon>
        <taxon>Pseudomonadota</taxon>
        <taxon>Gammaproteobacteria</taxon>
        <taxon>Alteromonadales</taxon>
        <taxon>Shewanellaceae</taxon>
        <taxon>Shewanella</taxon>
    </lineage>
</organism>